<proteinExistence type="evidence at transcript level"/>
<name>RPB2_CAEEL</name>
<organism>
    <name type="scientific">Caenorhabditis elegans</name>
    <dbReference type="NCBI Taxonomy" id="6239"/>
    <lineage>
        <taxon>Eukaryota</taxon>
        <taxon>Metazoa</taxon>
        <taxon>Ecdysozoa</taxon>
        <taxon>Nematoda</taxon>
        <taxon>Chromadorea</taxon>
        <taxon>Rhabditida</taxon>
        <taxon>Rhabditina</taxon>
        <taxon>Rhabditomorpha</taxon>
        <taxon>Rhabditoidea</taxon>
        <taxon>Rhabditidae</taxon>
        <taxon>Peloderinae</taxon>
        <taxon>Caenorhabditis</taxon>
    </lineage>
</organism>
<keyword id="KW-0240">DNA-directed RNA polymerase</keyword>
<keyword id="KW-0460">Magnesium</keyword>
<keyword id="KW-0479">Metal-binding</keyword>
<keyword id="KW-0548">Nucleotidyltransferase</keyword>
<keyword id="KW-0539">Nucleus</keyword>
<keyword id="KW-1185">Reference proteome</keyword>
<keyword id="KW-0804">Transcription</keyword>
<keyword id="KW-0808">Transferase</keyword>
<keyword id="KW-0862">Zinc</keyword>
<keyword id="KW-0863">Zinc-finger</keyword>
<sequence length="1193" mass="134905">MYDDEDEMVNDPMDGDYIDDSDEISAEAWQEACWVVISAYFDEKGLVRQQLDSFDEFVQMNVQRIVEDSPPVELQSENQHLGTDMENPAKFSLKFNQIYLSKPTHWEKDGAPMPMMPNEARLRNLTYASPLYVDITKVVTRDDSATEKVYDKVFVGKVPVMLRSSYCMLSNMTDRDLTELNECPLDPGGYFVINGSEKVLIAQEKMATNTVYVFSMKDGKYAFKTECRSCLENSSRPTSTMWVNMLARGGGGGKKTAMGQRIIGILPYIKQEIPIMIVFRALGFVSDRDILGHIIYDFNDPEMMEMVKPSLDEAFVIQEQNVALNFIGARGAKPGVTREQRIKYAREILQKELLPHVGVSEHCETKKAFFIGYMVHRLLLAALGRRELDDRDHIGNKRLDLAGPLLAFLFRSLFRNLLKEMRMTAQKYINKNDDFALDVCVKTSTITRGLTYSLATGNWGDQKKAHQSRAGVSQVLNRLTYTATLSHLRRANSPIGREGKLAKPRQLHNTQWGMVCPAETPEGQAVGLVKNLALMAYISVGSLPEPILEFLEEWSMENLEEVSPSAIADATKIFVNGAWVGIHREPDQLMTTLKKLRRQMDIIVSEVSMVRDIRDREIRIYTDAGRVCRPLLIVENQKLALKKRHIDQLKEAADEANKYTWSDLVGGGVVELIDSMEEETSMIAMMPEDLRSGGYCDTHTHCEIHPAMILGVCASIIPFPDHNQSPRNTYQSAMGKQAMGVYTTNFHVRMDTLAHVLYYPQKPLVTTRSMEYLRFNELPAGINAIVAILSYSGYNQEDSVIMNNSAIDRGLFRSVFYRSYRDNEANLDNANEELIEKPTREKCSGMRHSLYDKLDEDGIISPGMRVSGDDVIIGKTVALPDIDDDLDASGKKYPKRDASTFLRSSETGIVDQVMLSLNSDGNKFVKIRMRSVRLPQIGDKFASRHGQKGTMGIMYRQEDMPFTAEGLTPDIIINPHAVPSRMTIGHLIECLQGKLSANKGEIGDATPFNDTVNVQKISGLLCEYGYHLRGNEVMYNGHTGKKLTTQIFFGPTYYQRLKHMVDDKIHSRARGPIQMMNRQPMEGRARDGGLRFGEMERDCQISHGATQFLRERLFEVSDPYHVYVCNNCGLIVVANLRTNSFECKACRNKTQVSAVRIPYACKLLFQELMSMSIAPRLMVKPRQSKRSKHQSEA</sequence>
<evidence type="ECO:0000250" key="1"/>
<evidence type="ECO:0000305" key="2"/>
<dbReference type="EC" id="2.7.7.6"/>
<dbReference type="EMBL" id="FO080680">
    <property type="protein sequence ID" value="CCD65728.1"/>
    <property type="molecule type" value="Genomic_DNA"/>
</dbReference>
<dbReference type="EMBL" id="U10333">
    <property type="protein sequence ID" value="AAA50224.1"/>
    <property type="molecule type" value="mRNA"/>
</dbReference>
<dbReference type="PIR" id="E88445">
    <property type="entry name" value="E88445"/>
</dbReference>
<dbReference type="PIR" id="T43701">
    <property type="entry name" value="T43701"/>
</dbReference>
<dbReference type="RefSeq" id="NP_498047.1">
    <property type="nucleotide sequence ID" value="NM_065646.4"/>
</dbReference>
<dbReference type="SMR" id="Q10578"/>
<dbReference type="BioGRID" id="40901">
    <property type="interactions" value="26"/>
</dbReference>
<dbReference type="FunCoup" id="Q10578">
    <property type="interactions" value="2412"/>
</dbReference>
<dbReference type="STRING" id="6239.C26E6.4.1"/>
<dbReference type="iPTMnet" id="Q10578"/>
<dbReference type="PaxDb" id="6239-C26E6.4"/>
<dbReference type="PeptideAtlas" id="Q10578"/>
<dbReference type="EnsemblMetazoa" id="C26E6.4.1">
    <property type="protein sequence ID" value="C26E6.4.1"/>
    <property type="gene ID" value="WBGene00016140"/>
</dbReference>
<dbReference type="GeneID" id="175668"/>
<dbReference type="KEGG" id="cel:CELE_C26E6.4"/>
<dbReference type="AGR" id="WB:WBGene00016140"/>
<dbReference type="CTD" id="175668"/>
<dbReference type="WormBase" id="C26E6.4">
    <property type="protein sequence ID" value="CE52920"/>
    <property type="gene ID" value="WBGene00016140"/>
    <property type="gene designation" value="rpb-2"/>
</dbReference>
<dbReference type="eggNOG" id="KOG0214">
    <property type="taxonomic scope" value="Eukaryota"/>
</dbReference>
<dbReference type="GeneTree" id="ENSGT00950000183132"/>
<dbReference type="HOGENOM" id="CLU_000524_5_2_1"/>
<dbReference type="InParanoid" id="Q10578"/>
<dbReference type="OMA" id="CYDRNDS"/>
<dbReference type="OrthoDB" id="10248617at2759"/>
<dbReference type="PhylomeDB" id="Q10578"/>
<dbReference type="Reactome" id="R-CEL-112382">
    <property type="pathway name" value="Formation of RNA Pol II elongation complex"/>
</dbReference>
<dbReference type="Reactome" id="R-CEL-113418">
    <property type="pathway name" value="Formation of the Early Elongation Complex"/>
</dbReference>
<dbReference type="Reactome" id="R-CEL-5578749">
    <property type="pathway name" value="Transcriptional regulation by small RNAs"/>
</dbReference>
<dbReference type="Reactome" id="R-CEL-674695">
    <property type="pathway name" value="RNA Polymerase II Pre-transcription Events"/>
</dbReference>
<dbReference type="Reactome" id="R-CEL-6781823">
    <property type="pathway name" value="Formation of TC-NER Pre-Incision Complex"/>
</dbReference>
<dbReference type="Reactome" id="R-CEL-6782135">
    <property type="pathway name" value="Dual incision in TC-NER"/>
</dbReference>
<dbReference type="Reactome" id="R-CEL-6782210">
    <property type="pathway name" value="Gap-filling DNA repair synthesis and ligation in TC-NER"/>
</dbReference>
<dbReference type="Reactome" id="R-CEL-6796648">
    <property type="pathway name" value="TP53 Regulates Transcription of DNA Repair Genes"/>
</dbReference>
<dbReference type="Reactome" id="R-CEL-6803529">
    <property type="pathway name" value="FGFR2 alternative splicing"/>
</dbReference>
<dbReference type="Reactome" id="R-CEL-6807505">
    <property type="pathway name" value="RNA polymerase II transcribes snRNA genes"/>
</dbReference>
<dbReference type="Reactome" id="R-CEL-72086">
    <property type="pathway name" value="mRNA Capping"/>
</dbReference>
<dbReference type="Reactome" id="R-CEL-72163">
    <property type="pathway name" value="mRNA Splicing - Major Pathway"/>
</dbReference>
<dbReference type="Reactome" id="R-CEL-72165">
    <property type="pathway name" value="mRNA Splicing - Minor Pathway"/>
</dbReference>
<dbReference type="Reactome" id="R-CEL-72203">
    <property type="pathway name" value="Processing of Capped Intron-Containing Pre-mRNA"/>
</dbReference>
<dbReference type="Reactome" id="R-CEL-73776">
    <property type="pathway name" value="RNA Polymerase II Promoter Escape"/>
</dbReference>
<dbReference type="Reactome" id="R-CEL-73779">
    <property type="pathway name" value="RNA Polymerase II Transcription Pre-Initiation And Promoter Opening"/>
</dbReference>
<dbReference type="Reactome" id="R-CEL-75953">
    <property type="pathway name" value="RNA Polymerase II Transcription Initiation"/>
</dbReference>
<dbReference type="Reactome" id="R-CEL-75955">
    <property type="pathway name" value="RNA Polymerase II Transcription Elongation"/>
</dbReference>
<dbReference type="Reactome" id="R-CEL-76042">
    <property type="pathway name" value="RNA Polymerase II Transcription Initiation And Promoter Clearance"/>
</dbReference>
<dbReference type="Reactome" id="R-CEL-77075">
    <property type="pathway name" value="RNA Pol II CTD phosphorylation and interaction with CE"/>
</dbReference>
<dbReference type="Reactome" id="R-CEL-9018519">
    <property type="pathway name" value="Estrogen-dependent gene expression"/>
</dbReference>
<dbReference type="PRO" id="PR:Q10578"/>
<dbReference type="Proteomes" id="UP000001940">
    <property type="component" value="Chromosome III"/>
</dbReference>
<dbReference type="Bgee" id="WBGene00016140">
    <property type="expression patterns" value="Expressed in embryo and 4 other cell types or tissues"/>
</dbReference>
<dbReference type="GO" id="GO:0005739">
    <property type="term" value="C:mitochondrion"/>
    <property type="evidence" value="ECO:0007669"/>
    <property type="project" value="GOC"/>
</dbReference>
<dbReference type="GO" id="GO:0005665">
    <property type="term" value="C:RNA polymerase II, core complex"/>
    <property type="evidence" value="ECO:0000318"/>
    <property type="project" value="GO_Central"/>
</dbReference>
<dbReference type="GO" id="GO:0003677">
    <property type="term" value="F:DNA binding"/>
    <property type="evidence" value="ECO:0007669"/>
    <property type="project" value="InterPro"/>
</dbReference>
<dbReference type="GO" id="GO:0003899">
    <property type="term" value="F:DNA-directed RNA polymerase activity"/>
    <property type="evidence" value="ECO:0007669"/>
    <property type="project" value="UniProtKB-EC"/>
</dbReference>
<dbReference type="GO" id="GO:0032549">
    <property type="term" value="F:ribonucleoside binding"/>
    <property type="evidence" value="ECO:0007669"/>
    <property type="project" value="InterPro"/>
</dbReference>
<dbReference type="GO" id="GO:0008270">
    <property type="term" value="F:zinc ion binding"/>
    <property type="evidence" value="ECO:0007669"/>
    <property type="project" value="UniProtKB-KW"/>
</dbReference>
<dbReference type="GO" id="GO:0006351">
    <property type="term" value="P:DNA-templated transcription"/>
    <property type="evidence" value="ECO:0007669"/>
    <property type="project" value="InterPro"/>
</dbReference>
<dbReference type="CDD" id="cd00653">
    <property type="entry name" value="RNA_pol_B_RPB2"/>
    <property type="match status" value="1"/>
</dbReference>
<dbReference type="FunFam" id="2.40.270.10:FF:000011">
    <property type="entry name" value="DNA-directed RNA polymerase subunit beta"/>
    <property type="match status" value="1"/>
</dbReference>
<dbReference type="FunFam" id="2.40.50.150:FF:000002">
    <property type="entry name" value="DNA-directed RNA polymerase subunit beta"/>
    <property type="match status" value="1"/>
</dbReference>
<dbReference type="FunFam" id="3.90.1070.20:FF:000001">
    <property type="entry name" value="DNA-directed RNA polymerase subunit beta"/>
    <property type="match status" value="1"/>
</dbReference>
<dbReference type="FunFam" id="3.90.1100.10:FF:000003">
    <property type="entry name" value="DNA-directed RNA polymerase subunit beta"/>
    <property type="match status" value="1"/>
</dbReference>
<dbReference type="FunFam" id="3.90.1100.10:FF:000005">
    <property type="entry name" value="DNA-directed RNA polymerase subunit beta"/>
    <property type="match status" value="1"/>
</dbReference>
<dbReference type="FunFam" id="3.90.1110.10:FF:000002">
    <property type="entry name" value="DNA-directed RNA polymerase subunit beta"/>
    <property type="match status" value="1"/>
</dbReference>
<dbReference type="FunFam" id="3.90.1800.10:FF:000002">
    <property type="entry name" value="DNA-directed RNA polymerase subunit beta"/>
    <property type="match status" value="1"/>
</dbReference>
<dbReference type="Gene3D" id="2.40.50.150">
    <property type="match status" value="1"/>
</dbReference>
<dbReference type="Gene3D" id="3.90.1070.20">
    <property type="match status" value="1"/>
</dbReference>
<dbReference type="Gene3D" id="3.90.1100.10">
    <property type="match status" value="1"/>
</dbReference>
<dbReference type="Gene3D" id="2.40.270.10">
    <property type="entry name" value="DNA-directed RNA polymerase, subunit 2, domain 6"/>
    <property type="match status" value="1"/>
</dbReference>
<dbReference type="Gene3D" id="3.90.1800.10">
    <property type="entry name" value="RNA polymerase alpha subunit dimerisation domain"/>
    <property type="match status" value="1"/>
</dbReference>
<dbReference type="Gene3D" id="3.90.1110.10">
    <property type="entry name" value="RNA polymerase Rpb2, domain 2"/>
    <property type="match status" value="1"/>
</dbReference>
<dbReference type="InterPro" id="IPR015712">
    <property type="entry name" value="DNA-dir_RNA_pol_su2"/>
</dbReference>
<dbReference type="InterPro" id="IPR007120">
    <property type="entry name" value="DNA-dir_RNAP_su2_dom"/>
</dbReference>
<dbReference type="InterPro" id="IPR037033">
    <property type="entry name" value="DNA-dir_RNAP_su2_hyb_sf"/>
</dbReference>
<dbReference type="InterPro" id="IPR007121">
    <property type="entry name" value="RNA_pol_bsu_CS"/>
</dbReference>
<dbReference type="InterPro" id="IPR007644">
    <property type="entry name" value="RNA_pol_bsu_protrusion"/>
</dbReference>
<dbReference type="InterPro" id="IPR007642">
    <property type="entry name" value="RNA_pol_Rpb2_2"/>
</dbReference>
<dbReference type="InterPro" id="IPR037034">
    <property type="entry name" value="RNA_pol_Rpb2_2_sf"/>
</dbReference>
<dbReference type="InterPro" id="IPR007645">
    <property type="entry name" value="RNA_pol_Rpb2_3"/>
</dbReference>
<dbReference type="InterPro" id="IPR007646">
    <property type="entry name" value="RNA_pol_Rpb2_4"/>
</dbReference>
<dbReference type="InterPro" id="IPR007647">
    <property type="entry name" value="RNA_pol_Rpb2_5"/>
</dbReference>
<dbReference type="InterPro" id="IPR007641">
    <property type="entry name" value="RNA_pol_Rpb2_7"/>
</dbReference>
<dbReference type="InterPro" id="IPR014724">
    <property type="entry name" value="RNA_pol_RPB2_OB-fold"/>
</dbReference>
<dbReference type="NCBIfam" id="NF007175">
    <property type="entry name" value="PRK09606.1"/>
    <property type="match status" value="1"/>
</dbReference>
<dbReference type="PANTHER" id="PTHR20856">
    <property type="entry name" value="DNA-DIRECTED RNA POLYMERASE I SUBUNIT 2"/>
    <property type="match status" value="1"/>
</dbReference>
<dbReference type="Pfam" id="PF04563">
    <property type="entry name" value="RNA_pol_Rpb2_1"/>
    <property type="match status" value="1"/>
</dbReference>
<dbReference type="Pfam" id="PF04561">
    <property type="entry name" value="RNA_pol_Rpb2_2"/>
    <property type="match status" value="1"/>
</dbReference>
<dbReference type="Pfam" id="PF04565">
    <property type="entry name" value="RNA_pol_Rpb2_3"/>
    <property type="match status" value="1"/>
</dbReference>
<dbReference type="Pfam" id="PF04566">
    <property type="entry name" value="RNA_pol_Rpb2_4"/>
    <property type="match status" value="1"/>
</dbReference>
<dbReference type="Pfam" id="PF04567">
    <property type="entry name" value="RNA_pol_Rpb2_5"/>
    <property type="match status" value="1"/>
</dbReference>
<dbReference type="Pfam" id="PF00562">
    <property type="entry name" value="RNA_pol_Rpb2_6"/>
    <property type="match status" value="1"/>
</dbReference>
<dbReference type="Pfam" id="PF04560">
    <property type="entry name" value="RNA_pol_Rpb2_7"/>
    <property type="match status" value="1"/>
</dbReference>
<dbReference type="SUPFAM" id="SSF64484">
    <property type="entry name" value="beta and beta-prime subunits of DNA dependent RNA-polymerase"/>
    <property type="match status" value="1"/>
</dbReference>
<dbReference type="PROSITE" id="PS01166">
    <property type="entry name" value="RNA_POL_BETA"/>
    <property type="match status" value="1"/>
</dbReference>
<reference key="1">
    <citation type="journal article" date="1998" name="Science">
        <title>Genome sequence of the nematode C. elegans: a platform for investigating biology.</title>
        <authorList>
            <consortium name="The C. elegans sequencing consortium"/>
        </authorList>
    </citation>
    <scope>NUCLEOTIDE SEQUENCE [LARGE SCALE GENOMIC DNA]</scope>
    <source>
        <strain>Bristol N2</strain>
    </source>
</reference>
<reference key="2">
    <citation type="journal article" date="1994" name="Curr. Biol.">
        <title>A molecular evolutionary framework for eukaryotic model organisms.</title>
        <authorList>
            <person name="Sidow A."/>
            <person name="Thomas W.K."/>
        </authorList>
    </citation>
    <scope>NUCLEOTIDE SEQUENCE [MRNA] OF 200-1058</scope>
</reference>
<feature type="chain" id="PRO_0000048083" description="DNA-directed RNA polymerase II subunit RPB2">
    <location>
        <begin position="1"/>
        <end position="1193"/>
    </location>
</feature>
<feature type="zinc finger region" description="C4-type">
    <location>
        <begin position="1125"/>
        <end position="1146"/>
    </location>
</feature>
<feature type="binding site" evidence="1">
    <location>
        <position position="798"/>
    </location>
    <ligand>
        <name>Mg(2+)</name>
        <dbReference type="ChEBI" id="CHEBI:18420"/>
        <note>ligand shared with RPB1</note>
    </ligand>
</feature>
<feature type="binding site" evidence="1">
    <location>
        <position position="1125"/>
    </location>
    <ligand>
        <name>Zn(2+)</name>
        <dbReference type="ChEBI" id="CHEBI:29105"/>
    </ligand>
</feature>
<feature type="binding site" evidence="1">
    <location>
        <position position="1128"/>
    </location>
    <ligand>
        <name>Zn(2+)</name>
        <dbReference type="ChEBI" id="CHEBI:29105"/>
    </ligand>
</feature>
<feature type="binding site" evidence="1">
    <location>
        <position position="1143"/>
    </location>
    <ligand>
        <name>Zn(2+)</name>
        <dbReference type="ChEBI" id="CHEBI:29105"/>
    </ligand>
</feature>
<feature type="binding site" evidence="1">
    <location>
        <position position="1146"/>
    </location>
    <ligand>
        <name>Zn(2+)</name>
        <dbReference type="ChEBI" id="CHEBI:29105"/>
    </ligand>
</feature>
<protein>
    <recommendedName>
        <fullName>DNA-directed RNA polymerase II subunit RPB2</fullName>
        <shortName>RNA polymerase II subunit 2</shortName>
        <shortName>RNA polymerase II subunit B2</shortName>
        <ecNumber>2.7.7.6</ecNumber>
    </recommendedName>
</protein>
<accession>Q10578</accession>
<gene>
    <name type="primary">rpb-2</name>
    <name type="ORF">C26E6.4</name>
</gene>
<comment type="function">
    <text evidence="1">DNA-dependent RNA polymerase catalyzes the transcription of DNA into RNA using the four ribonucleoside triphosphates as substrates. Second largest component of RNA polymerase II which synthesizes mRNA precursors and many functional non-coding RNAs. Proposed to contribute to the polymerase catalytic activity and forms the polymerase active center together with the largest subunit. Pol II is the central component of the basal RNA polymerase II transcription machinery. It is composed of mobile elements that move relative to each other. RPB2 is part of the core element with the central large cleft, the clamp element that moves to open and close the cleft and the jaws that are thought to grab the incoming DNA template (By similarity).</text>
</comment>
<comment type="catalytic activity">
    <reaction>
        <text>RNA(n) + a ribonucleoside 5'-triphosphate = RNA(n+1) + diphosphate</text>
        <dbReference type="Rhea" id="RHEA:21248"/>
        <dbReference type="Rhea" id="RHEA-COMP:14527"/>
        <dbReference type="Rhea" id="RHEA-COMP:17342"/>
        <dbReference type="ChEBI" id="CHEBI:33019"/>
        <dbReference type="ChEBI" id="CHEBI:61557"/>
        <dbReference type="ChEBI" id="CHEBI:140395"/>
        <dbReference type="EC" id="2.7.7.6"/>
    </reaction>
</comment>
<comment type="subunit">
    <text evidence="1">Component of the RNA polymerase II (Pol II) complex consisting of 12 subunits.</text>
</comment>
<comment type="subcellular location">
    <subcellularLocation>
        <location evidence="1">Nucleus</location>
    </subcellularLocation>
</comment>
<comment type="miscellaneous">
    <text evidence="1">The binding of ribonucleoside triphosphate to the RNA polymerase II transcribing complex probably involves a two-step mechanism. The initial binding seems to occur at the entry (E) site and involves a magnesium ion coordinated by three conserved aspartate residues of the two largest RNA Pol II subunits (By similarity).</text>
</comment>
<comment type="similarity">
    <text evidence="2">Belongs to the RNA polymerase beta chain family.</text>
</comment>